<organism>
    <name type="scientific">Sulfurisphaera tokodaii (strain DSM 16993 / JCM 10545 / NBRC 100140 / 7)</name>
    <name type="common">Sulfolobus tokodaii</name>
    <dbReference type="NCBI Taxonomy" id="273063"/>
    <lineage>
        <taxon>Archaea</taxon>
        <taxon>Thermoproteota</taxon>
        <taxon>Thermoprotei</taxon>
        <taxon>Sulfolobales</taxon>
        <taxon>Sulfolobaceae</taxon>
        <taxon>Sulfurisphaera</taxon>
    </lineage>
</organism>
<accession>Q975W6</accession>
<feature type="chain" id="PRO_0000094423" description="16S rRNA aminocarboxypropyltransferase">
    <location>
        <begin position="1"/>
        <end position="167"/>
    </location>
</feature>
<feature type="binding site" evidence="1 2">
    <location>
        <position position="17"/>
    </location>
    <ligand>
        <name>S-adenosyl-L-methionine</name>
        <dbReference type="ChEBI" id="CHEBI:59789"/>
    </ligand>
</feature>
<feature type="binding site" evidence="2">
    <location>
        <position position="62"/>
    </location>
    <ligand>
        <name>S-adenosyl-L-methionine</name>
        <dbReference type="ChEBI" id="CHEBI:59789"/>
    </ligand>
</feature>
<feature type="binding site" evidence="1 2">
    <location>
        <position position="84"/>
    </location>
    <ligand>
        <name>S-adenosyl-L-methionine</name>
        <dbReference type="ChEBI" id="CHEBI:59789"/>
    </ligand>
</feature>
<feature type="binding site" evidence="1 2">
    <location>
        <position position="99"/>
    </location>
    <ligand>
        <name>S-adenosyl-L-methionine</name>
        <dbReference type="ChEBI" id="CHEBI:59789"/>
    </ligand>
</feature>
<feature type="binding site" evidence="2">
    <location>
        <position position="103"/>
    </location>
    <ligand>
        <name>S-adenosyl-L-methionine</name>
        <dbReference type="ChEBI" id="CHEBI:59789"/>
    </ligand>
</feature>
<protein>
    <recommendedName>
        <fullName evidence="2 3">16S rRNA aminocarboxypropyltransferase</fullName>
        <ecNumber evidence="2">2.5.1.157</ecNumber>
    </recommendedName>
</protein>
<gene>
    <name type="ordered locus">STK_03110</name>
</gene>
<name>TSR3_SULTO</name>
<reference key="1">
    <citation type="journal article" date="2001" name="DNA Res.">
        <title>Complete genome sequence of an aerobic thermoacidophilic Crenarchaeon, Sulfolobus tokodaii strain7.</title>
        <authorList>
            <person name="Kawarabayasi Y."/>
            <person name="Hino Y."/>
            <person name="Horikawa H."/>
            <person name="Jin-no K."/>
            <person name="Takahashi M."/>
            <person name="Sekine M."/>
            <person name="Baba S."/>
            <person name="Ankai A."/>
            <person name="Kosugi H."/>
            <person name="Hosoyama A."/>
            <person name="Fukui S."/>
            <person name="Nagai Y."/>
            <person name="Nishijima K."/>
            <person name="Otsuka R."/>
            <person name="Nakazawa H."/>
            <person name="Takamiya M."/>
            <person name="Kato Y."/>
            <person name="Yoshizawa T."/>
            <person name="Tanaka T."/>
            <person name="Kudoh Y."/>
            <person name="Yamazaki J."/>
            <person name="Kushida N."/>
            <person name="Oguchi A."/>
            <person name="Aoki K."/>
            <person name="Masuda S."/>
            <person name="Yanagii M."/>
            <person name="Nishimura M."/>
            <person name="Yamagishi A."/>
            <person name="Oshima T."/>
            <person name="Kikuchi H."/>
        </authorList>
    </citation>
    <scope>NUCLEOTIDE SEQUENCE [LARGE SCALE GENOMIC DNA]</scope>
    <source>
        <strain>DSM 16993 / JCM 10545 / NBRC 100140 / 7</strain>
    </source>
</reference>
<sequence>MKVYIIDYHRDDPKKCTGRKLIKLNFAELTRYGKGIILDPYSKRILSILDKDIALKTGITIVDTSWNSTSKIEFEKIKGEHRRLPILFAGNPTNYGIAYKLSSIEAVIASLYILNEVEEAIKIANIIKWGHTFLELNKELLESYRNKSENEILEIEREVIEKIIGEP</sequence>
<keyword id="KW-0963">Cytoplasm</keyword>
<keyword id="KW-1185">Reference proteome</keyword>
<keyword id="KW-0690">Ribosome biogenesis</keyword>
<keyword id="KW-0698">rRNA processing</keyword>
<keyword id="KW-0949">S-adenosyl-L-methionine</keyword>
<keyword id="KW-0808">Transferase</keyword>
<dbReference type="EC" id="2.5.1.157" evidence="2"/>
<dbReference type="EMBL" id="BA000023">
    <property type="protein sequence ID" value="BAB65282.1"/>
    <property type="molecule type" value="Genomic_DNA"/>
</dbReference>
<dbReference type="RefSeq" id="WP_010978265.1">
    <property type="nucleotide sequence ID" value="NC_003106.2"/>
</dbReference>
<dbReference type="SMR" id="Q975W6"/>
<dbReference type="STRING" id="273063.STK_03110"/>
<dbReference type="GeneID" id="1458218"/>
<dbReference type="KEGG" id="sto:STK_03110"/>
<dbReference type="PATRIC" id="fig|273063.9.peg.363"/>
<dbReference type="eggNOG" id="arCOG04733">
    <property type="taxonomic scope" value="Archaea"/>
</dbReference>
<dbReference type="OrthoDB" id="7441at2157"/>
<dbReference type="Proteomes" id="UP000001015">
    <property type="component" value="Chromosome"/>
</dbReference>
<dbReference type="GO" id="GO:0005737">
    <property type="term" value="C:cytoplasm"/>
    <property type="evidence" value="ECO:0007669"/>
    <property type="project" value="UniProtKB-SubCell"/>
</dbReference>
<dbReference type="GO" id="GO:0106388">
    <property type="term" value="F:18S rRNA aminocarboxypropyltransferase activity"/>
    <property type="evidence" value="ECO:0007669"/>
    <property type="project" value="InterPro"/>
</dbReference>
<dbReference type="GO" id="GO:1904047">
    <property type="term" value="F:S-adenosyl-L-methionine binding"/>
    <property type="evidence" value="ECO:0007669"/>
    <property type="project" value="UniProtKB-UniRule"/>
</dbReference>
<dbReference type="GO" id="GO:0000455">
    <property type="term" value="P:enzyme-directed rRNA pseudouridine synthesis"/>
    <property type="evidence" value="ECO:0007669"/>
    <property type="project" value="UniProtKB-UniRule"/>
</dbReference>
<dbReference type="HAMAP" id="MF_01116">
    <property type="entry name" value="TSR3"/>
    <property type="match status" value="1"/>
</dbReference>
<dbReference type="InterPro" id="IPR007209">
    <property type="entry name" value="RNaseL-inhib-like_metal-bd_dom"/>
</dbReference>
<dbReference type="InterPro" id="IPR022968">
    <property type="entry name" value="Tsr3-like"/>
</dbReference>
<dbReference type="InterPro" id="IPR007177">
    <property type="entry name" value="Tsr3_C"/>
</dbReference>
<dbReference type="NCBIfam" id="NF002621">
    <property type="entry name" value="PRK02287.1"/>
    <property type="match status" value="1"/>
</dbReference>
<dbReference type="PANTHER" id="PTHR20426:SF0">
    <property type="entry name" value="18S RRNA AMINOCARBOXYPROPYLTRANSFERASE"/>
    <property type="match status" value="1"/>
</dbReference>
<dbReference type="PANTHER" id="PTHR20426">
    <property type="entry name" value="RIBOSOME BIOGENESIS PROTEIN TSR3 HOMOLOG"/>
    <property type="match status" value="1"/>
</dbReference>
<dbReference type="Pfam" id="PF04068">
    <property type="entry name" value="Fer4_RLI"/>
    <property type="match status" value="1"/>
</dbReference>
<dbReference type="Pfam" id="PF04034">
    <property type="entry name" value="Ribo_biogen_C"/>
    <property type="match status" value="1"/>
</dbReference>
<comment type="function">
    <text evidence="2">Aminocarboxypropyltransferase that catalyzes the aminocarboxypropyl transfer on pseudouridine corresponding to position 914 in M.jannaschii 16S rRNA. It constitutes the last step in biosynthesis of the hypermodified N1-methyl-N3-(3-amino-3-carboxypropyl) pseudouridine (m1acp3-Psi).</text>
</comment>
<comment type="catalytic activity">
    <reaction evidence="2">
        <text>an N(1)-methylpseudouridine in rRNA + S-adenosyl-L-methionine = N(1)-methyl-N(3)-[(3S)-3-amino-3-carboxypropyl]pseudouridine in rRNA + S-methyl-5'-thioadenosine + H(+)</text>
        <dbReference type="Rhea" id="RHEA:63296"/>
        <dbReference type="Rhea" id="RHEA-COMP:11634"/>
        <dbReference type="Rhea" id="RHEA-COMP:16310"/>
        <dbReference type="ChEBI" id="CHEBI:15378"/>
        <dbReference type="ChEBI" id="CHEBI:17509"/>
        <dbReference type="ChEBI" id="CHEBI:59789"/>
        <dbReference type="ChEBI" id="CHEBI:74890"/>
        <dbReference type="ChEBI" id="CHEBI:146234"/>
        <dbReference type="EC" id="2.5.1.157"/>
    </reaction>
</comment>
<comment type="subcellular location">
    <subcellularLocation>
        <location evidence="2">Cytoplasm</location>
    </subcellularLocation>
</comment>
<comment type="similarity">
    <text evidence="2">Belongs to the TDD superfamily. TSR3 family.</text>
</comment>
<evidence type="ECO:0000250" key="1">
    <source>
        <dbReference type="UniProtKB" id="E1QU22"/>
    </source>
</evidence>
<evidence type="ECO:0000255" key="2">
    <source>
        <dbReference type="HAMAP-Rule" id="MF_01116"/>
    </source>
</evidence>
<evidence type="ECO:0000305" key="3"/>
<proteinExistence type="inferred from homology"/>